<proteinExistence type="inferred from homology"/>
<gene>
    <name type="primary">IML1</name>
    <name type="ordered locus">YALI0D01067g</name>
</gene>
<accession>Q6CAP3</accession>
<dbReference type="EMBL" id="CR382130">
    <property type="protein sequence ID" value="CAG80455.1"/>
    <property type="molecule type" value="Genomic_DNA"/>
</dbReference>
<dbReference type="RefSeq" id="XP_502269.1">
    <property type="nucleotide sequence ID" value="XM_502269.1"/>
</dbReference>
<dbReference type="SMR" id="Q6CAP3"/>
<dbReference type="FunCoup" id="Q6CAP3">
    <property type="interactions" value="671"/>
</dbReference>
<dbReference type="STRING" id="284591.Q6CAP3"/>
<dbReference type="EnsemblFungi" id="CAG80455">
    <property type="protein sequence ID" value="CAG80455"/>
    <property type="gene ID" value="YALI0_D01067g"/>
</dbReference>
<dbReference type="KEGG" id="yli:2910415"/>
<dbReference type="VEuPathDB" id="FungiDB:YALI0_D01067g"/>
<dbReference type="HOGENOM" id="CLU_000935_1_1_1"/>
<dbReference type="InParanoid" id="Q6CAP3"/>
<dbReference type="OMA" id="RTWHFKR"/>
<dbReference type="OrthoDB" id="112246at4891"/>
<dbReference type="Proteomes" id="UP000001300">
    <property type="component" value="Chromosome D"/>
</dbReference>
<dbReference type="GO" id="GO:1990130">
    <property type="term" value="C:GATOR1 complex"/>
    <property type="evidence" value="ECO:0000318"/>
    <property type="project" value="GO_Central"/>
</dbReference>
<dbReference type="GO" id="GO:0005774">
    <property type="term" value="C:vacuolar membrane"/>
    <property type="evidence" value="ECO:0007669"/>
    <property type="project" value="UniProtKB-SubCell"/>
</dbReference>
<dbReference type="GO" id="GO:0005096">
    <property type="term" value="F:GTPase activator activity"/>
    <property type="evidence" value="ECO:0007669"/>
    <property type="project" value="InterPro"/>
</dbReference>
<dbReference type="GO" id="GO:0035556">
    <property type="term" value="P:intracellular signal transduction"/>
    <property type="evidence" value="ECO:0007669"/>
    <property type="project" value="InterPro"/>
</dbReference>
<dbReference type="GO" id="GO:1904262">
    <property type="term" value="P:negative regulation of TORC1 signaling"/>
    <property type="evidence" value="ECO:0000318"/>
    <property type="project" value="GO_Central"/>
</dbReference>
<dbReference type="GO" id="GO:0010508">
    <property type="term" value="P:positive regulation of autophagy"/>
    <property type="evidence" value="ECO:0000318"/>
    <property type="project" value="GO_Central"/>
</dbReference>
<dbReference type="CDD" id="cd04449">
    <property type="entry name" value="DEP_DEPDC5-like"/>
    <property type="match status" value="1"/>
</dbReference>
<dbReference type="Gene3D" id="1.10.10.10">
    <property type="entry name" value="Winged helix-like DNA-binding domain superfamily/Winged helix DNA-binding domain"/>
    <property type="match status" value="1"/>
</dbReference>
<dbReference type="InterPro" id="IPR000591">
    <property type="entry name" value="DEP_dom"/>
</dbReference>
<dbReference type="InterPro" id="IPR045838">
    <property type="entry name" value="DEPDC5_CTD"/>
</dbReference>
<dbReference type="InterPro" id="IPR027244">
    <property type="entry name" value="IML1"/>
</dbReference>
<dbReference type="InterPro" id="IPR048255">
    <property type="entry name" value="IML1_N"/>
</dbReference>
<dbReference type="InterPro" id="IPR036388">
    <property type="entry name" value="WH-like_DNA-bd_sf"/>
</dbReference>
<dbReference type="InterPro" id="IPR036390">
    <property type="entry name" value="WH_DNA-bd_sf"/>
</dbReference>
<dbReference type="PANTHER" id="PTHR13179">
    <property type="entry name" value="DEP DOMAIN CONTAINING PROTEIN 5"/>
    <property type="match status" value="1"/>
</dbReference>
<dbReference type="PANTHER" id="PTHR13179:SF8">
    <property type="entry name" value="GATOR COMPLEX PROTEIN DEPDC5"/>
    <property type="match status" value="1"/>
</dbReference>
<dbReference type="Pfam" id="PF00610">
    <property type="entry name" value="DEP"/>
    <property type="match status" value="1"/>
</dbReference>
<dbReference type="Pfam" id="PF19418">
    <property type="entry name" value="DEPDC5_CTD"/>
    <property type="match status" value="1"/>
</dbReference>
<dbReference type="Pfam" id="PF12257">
    <property type="entry name" value="IML1"/>
    <property type="match status" value="1"/>
</dbReference>
<dbReference type="SMART" id="SM00049">
    <property type="entry name" value="DEP"/>
    <property type="match status" value="1"/>
</dbReference>
<dbReference type="SUPFAM" id="SSF46785">
    <property type="entry name" value="Winged helix' DNA-binding domain"/>
    <property type="match status" value="1"/>
</dbReference>
<dbReference type="PROSITE" id="PS50186">
    <property type="entry name" value="DEP"/>
    <property type="match status" value="1"/>
</dbReference>
<keyword id="KW-0472">Membrane</keyword>
<keyword id="KW-1185">Reference proteome</keyword>
<keyword id="KW-0926">Vacuole</keyword>
<reference key="1">
    <citation type="journal article" date="2004" name="Nature">
        <title>Genome evolution in yeasts.</title>
        <authorList>
            <person name="Dujon B."/>
            <person name="Sherman D."/>
            <person name="Fischer G."/>
            <person name="Durrens P."/>
            <person name="Casaregola S."/>
            <person name="Lafontaine I."/>
            <person name="de Montigny J."/>
            <person name="Marck C."/>
            <person name="Neuveglise C."/>
            <person name="Talla E."/>
            <person name="Goffard N."/>
            <person name="Frangeul L."/>
            <person name="Aigle M."/>
            <person name="Anthouard V."/>
            <person name="Babour A."/>
            <person name="Barbe V."/>
            <person name="Barnay S."/>
            <person name="Blanchin S."/>
            <person name="Beckerich J.-M."/>
            <person name="Beyne E."/>
            <person name="Bleykasten C."/>
            <person name="Boisrame A."/>
            <person name="Boyer J."/>
            <person name="Cattolico L."/>
            <person name="Confanioleri F."/>
            <person name="de Daruvar A."/>
            <person name="Despons L."/>
            <person name="Fabre E."/>
            <person name="Fairhead C."/>
            <person name="Ferry-Dumazet H."/>
            <person name="Groppi A."/>
            <person name="Hantraye F."/>
            <person name="Hennequin C."/>
            <person name="Jauniaux N."/>
            <person name="Joyet P."/>
            <person name="Kachouri R."/>
            <person name="Kerrest A."/>
            <person name="Koszul R."/>
            <person name="Lemaire M."/>
            <person name="Lesur I."/>
            <person name="Ma L."/>
            <person name="Muller H."/>
            <person name="Nicaud J.-M."/>
            <person name="Nikolski M."/>
            <person name="Oztas S."/>
            <person name="Ozier-Kalogeropoulos O."/>
            <person name="Pellenz S."/>
            <person name="Potier S."/>
            <person name="Richard G.-F."/>
            <person name="Straub M.-L."/>
            <person name="Suleau A."/>
            <person name="Swennen D."/>
            <person name="Tekaia F."/>
            <person name="Wesolowski-Louvel M."/>
            <person name="Westhof E."/>
            <person name="Wirth B."/>
            <person name="Zeniou-Meyer M."/>
            <person name="Zivanovic Y."/>
            <person name="Bolotin-Fukuhara M."/>
            <person name="Thierry A."/>
            <person name="Bouchier C."/>
            <person name="Caudron B."/>
            <person name="Scarpelli C."/>
            <person name="Gaillardin C."/>
            <person name="Weissenbach J."/>
            <person name="Wincker P."/>
            <person name="Souciet J.-L."/>
        </authorList>
    </citation>
    <scope>NUCLEOTIDE SEQUENCE [LARGE SCALE GENOMIC DNA]</scope>
    <source>
        <strain>CLIB 122 / E 150</strain>
    </source>
</reference>
<evidence type="ECO:0000250" key="1"/>
<evidence type="ECO:0000255" key="2">
    <source>
        <dbReference type="PROSITE-ProRule" id="PRU00066"/>
    </source>
</evidence>
<evidence type="ECO:0000256" key="3">
    <source>
        <dbReference type="SAM" id="MobiDB-lite"/>
    </source>
</evidence>
<evidence type="ECO:0000305" key="4"/>
<protein>
    <recommendedName>
        <fullName>Vacuolar membrane-associated protein IML1</fullName>
    </recommendedName>
</protein>
<comment type="subcellular location">
    <subcellularLocation>
        <location evidence="1">Vacuole membrane</location>
        <topology evidence="1">Peripheral membrane protein</topology>
    </subcellularLocation>
</comment>
<comment type="similarity">
    <text evidence="4">Belongs to the IML1 family.</text>
</comment>
<feature type="chain" id="PRO_0000301780" description="Vacuolar membrane-associated protein IML1">
    <location>
        <begin position="1"/>
        <end position="1547"/>
    </location>
</feature>
<feature type="domain" description="DEP" evidence="2">
    <location>
        <begin position="1018"/>
        <end position="1093"/>
    </location>
</feature>
<feature type="region of interest" description="Disordered" evidence="3">
    <location>
        <begin position="489"/>
        <end position="517"/>
    </location>
</feature>
<feature type="region of interest" description="Disordered" evidence="3">
    <location>
        <begin position="597"/>
        <end position="632"/>
    </location>
</feature>
<feature type="region of interest" description="Disordered" evidence="3">
    <location>
        <begin position="1393"/>
        <end position="1547"/>
    </location>
</feature>
<feature type="compositionally biased region" description="Polar residues" evidence="3">
    <location>
        <begin position="608"/>
        <end position="618"/>
    </location>
</feature>
<feature type="compositionally biased region" description="Basic and acidic residues" evidence="3">
    <location>
        <begin position="1419"/>
        <end position="1450"/>
    </location>
</feature>
<feature type="compositionally biased region" description="Acidic residues" evidence="3">
    <location>
        <begin position="1451"/>
        <end position="1464"/>
    </location>
</feature>
<feature type="compositionally biased region" description="Acidic residues" evidence="3">
    <location>
        <begin position="1482"/>
        <end position="1494"/>
    </location>
</feature>
<feature type="compositionally biased region" description="Basic and acidic residues" evidence="3">
    <location>
        <begin position="1495"/>
        <end position="1547"/>
    </location>
</feature>
<sequence length="1547" mass="174836">MASCATVCLPTCGTRLSGHSRSRSVWKLVSYITLLHFILKVFLVFLTSFHLLTQLSIKSGNLLSSLGVAARSQVQIKLRKKEQVEADLVEICFKETYLTRADMWQITTMLRESCVYHQKRIVFCDVIRCWVDSIFKNGRKVFSAYIGPNTNIVFRSESSRMIIIIQLSQETWHFEETGEIIFHRMVNSLLPDIFKQWEENEHHHTVTIVLFTSVSMDSHAVKLKRGEKAKDVQDFYRVVCDQVQLSQWEQIMVRLRFEFQNFAKEVLTESHAKSHTEIRGRILPSVKSNILGAITLAASLVHSPAIDRDLRRTNVEVIVVSPGSGVYEVEYDALYRASEKISSTEVGVDIICMSKAPLHVTPLFLYKPKKCSNQLEYCVPSWIDISYYGDSDFFTNQWVPRCKIYEIQMMGVMENELSAITIDYLNKPSGKKPLSEYCREYDASLFGPIAVELSVEDAASVVSKMRSDTFPKLPVKQLLSSKGSISSLHAPTAVTSKTPPPKASVKVADVRPSPAASKPRVSALTSLLAFGVRAEKSAPASPALSAVNTLSSIQSMDLRRDNDSVKRDTESIVTDDTVHNTKAEPRITEIAPIAPSLPFAPNLKPKKSTSTLSQSPTYNRIAATPDQEVERRSSLSQKVQMGLSGSPLDHRGKVAKAASANAKSINTETTPEKRNMMWRNIRTPSNISQDEMLDILTYSRWRTVYPQKTKRRSAKWKLLASPAALPLRTNIFPTVAELQTEYRFQVYDVSLDTDMENVLGIHGLFREMVSVRLCKGFQLAIGSRVRHVESQRSDGRPSAITTDIGKDALGAVVYLTTGDQVHRISCDYSGMMNVQIYHAIDKVDIEEPVFDIYARRTYSDKFKHFIFPPFDTSSKRLNWNLYDHSLAGYDTAGSAATQTRLNQLRVVLIPSFLSRSKNLGHDDSSEVYNAEEVRLDGLRRILGGIYRHSISRDEDKERAKIAPNLKFYTGELEDFLFQIVESNPAELAGGRDSLFMKRNQRFDKNIKLAQLATELQAPKGGIRFFDRRWHWKSYPHCFIGQDFVEWLIDNYSDIDTPDEAVAYGNELMKKDFFVHVEDRHAFLDGHYFYQLKSEYATEATDSKPAEEKSGWFNSKRSMASVSSEKSLGRFKGSRNQSVQSFGDFLSLSRVTSRSSNDQKEEEINPITVEISKSVRVDLDPSKKSYRPETVLIHHDRIHNPRKCFHLRFEWANTTPKFIEDYISGLTRTCERYGLKLVELPILEVSALLEHNPFASEITLDMPTLDQLSGLPPHVLEYYASDPHAIAREILHHFGFVIDTLSMSDWKLAEVQIRNSWGVPTYKYSQWVEKNGLLIAQVVGDQIIMIPNNLQLNRQSGAQSNAIQLQSEAQGIILEMQYLMCRSEKVRDMLGKVNLSPEASPGTMTPGEEGSKNGTPKLAIEAKMEGRVESPQVEWREDVEIAPEVEHKGGADGDENDEEGDEKSEEGDKGESENENAGMGMEQDGENENENENENENSKDNKANETTSEVKEVPAGVEIEHKEHVEEDKSDGPEPKKEDKGKEVEDDK</sequence>
<name>IML1_YARLI</name>
<organism>
    <name type="scientific">Yarrowia lipolytica (strain CLIB 122 / E 150)</name>
    <name type="common">Yeast</name>
    <name type="synonym">Candida lipolytica</name>
    <dbReference type="NCBI Taxonomy" id="284591"/>
    <lineage>
        <taxon>Eukaryota</taxon>
        <taxon>Fungi</taxon>
        <taxon>Dikarya</taxon>
        <taxon>Ascomycota</taxon>
        <taxon>Saccharomycotina</taxon>
        <taxon>Dipodascomycetes</taxon>
        <taxon>Dipodascales</taxon>
        <taxon>Dipodascales incertae sedis</taxon>
        <taxon>Yarrowia</taxon>
    </lineage>
</organism>